<evidence type="ECO:0000250" key="1"/>
<evidence type="ECO:0000255" key="2"/>
<evidence type="ECO:0000305" key="3"/>
<feature type="transit peptide" description="Mitochondrion" evidence="2">
    <location>
        <begin position="1"/>
        <end status="unknown"/>
    </location>
</feature>
<feature type="chain" id="PRO_0000328139" description="Electron transfer flavoprotein-ubiquinone oxidoreductase, mitochondrial">
    <location>
        <begin status="unknown"/>
        <end position="606"/>
    </location>
</feature>
<feature type="transmembrane region" description="Helical" evidence="2">
    <location>
        <begin position="448"/>
        <end position="468"/>
    </location>
</feature>
<feature type="binding site" evidence="2">
    <location>
        <begin position="59"/>
        <end position="73"/>
    </location>
    <ligand>
        <name>FAD</name>
        <dbReference type="ChEBI" id="CHEBI:57692"/>
    </ligand>
</feature>
<feature type="binding site" evidence="2">
    <location>
        <position position="551"/>
    </location>
    <ligand>
        <name>[4Fe-4S] cluster</name>
        <dbReference type="ChEBI" id="CHEBI:49883"/>
    </ligand>
</feature>
<feature type="binding site" evidence="2">
    <location>
        <position position="575"/>
    </location>
    <ligand>
        <name>[4Fe-4S] cluster</name>
        <dbReference type="ChEBI" id="CHEBI:49883"/>
    </ligand>
</feature>
<feature type="binding site" evidence="2">
    <location>
        <position position="578"/>
    </location>
    <ligand>
        <name>[4Fe-4S] cluster</name>
        <dbReference type="ChEBI" id="CHEBI:49883"/>
    </ligand>
</feature>
<feature type="binding site" evidence="2">
    <location>
        <position position="581"/>
    </location>
    <ligand>
        <name>[4Fe-4S] cluster</name>
        <dbReference type="ChEBI" id="CHEBI:49883"/>
    </ligand>
</feature>
<dbReference type="EC" id="1.5.5.1"/>
<dbReference type="EMBL" id="AAFI02000024">
    <property type="protein sequence ID" value="EAL68026.1"/>
    <property type="molecule type" value="Genomic_DNA"/>
</dbReference>
<dbReference type="RefSeq" id="XP_642004.1">
    <property type="nucleotide sequence ID" value="XM_636912.1"/>
</dbReference>
<dbReference type="SMR" id="Q54XM6"/>
<dbReference type="FunCoup" id="Q54XM6">
    <property type="interactions" value="629"/>
</dbReference>
<dbReference type="STRING" id="44689.Q54XM6"/>
<dbReference type="PaxDb" id="44689-DDB0267019"/>
<dbReference type="EnsemblProtists" id="EAL68026">
    <property type="protein sequence ID" value="EAL68026"/>
    <property type="gene ID" value="DDB_G0278849"/>
</dbReference>
<dbReference type="GeneID" id="8621736"/>
<dbReference type="KEGG" id="ddi:DDB_G0278849"/>
<dbReference type="dictyBase" id="DDB_G0278849">
    <property type="gene designation" value="etfdh"/>
</dbReference>
<dbReference type="VEuPathDB" id="AmoebaDB:DDB_G0278849"/>
<dbReference type="eggNOG" id="KOG2415">
    <property type="taxonomic scope" value="Eukaryota"/>
</dbReference>
<dbReference type="HOGENOM" id="CLU_009667_4_1_1"/>
<dbReference type="InParanoid" id="Q54XM6"/>
<dbReference type="OMA" id="INFQNCV"/>
<dbReference type="PhylomeDB" id="Q54XM6"/>
<dbReference type="Reactome" id="R-DDI-611105">
    <property type="pathway name" value="Respiratory electron transport"/>
</dbReference>
<dbReference type="PRO" id="PR:Q54XM6"/>
<dbReference type="Proteomes" id="UP000002195">
    <property type="component" value="Chromosome 3"/>
</dbReference>
<dbReference type="GO" id="GO:0005743">
    <property type="term" value="C:mitochondrial inner membrane"/>
    <property type="evidence" value="ECO:0000318"/>
    <property type="project" value="GO_Central"/>
</dbReference>
<dbReference type="GO" id="GO:0051539">
    <property type="term" value="F:4 iron, 4 sulfur cluster binding"/>
    <property type="evidence" value="ECO:0007669"/>
    <property type="project" value="UniProtKB-KW"/>
</dbReference>
<dbReference type="GO" id="GO:0004174">
    <property type="term" value="F:electron-transferring-flavoprotein dehydrogenase activity"/>
    <property type="evidence" value="ECO:0000318"/>
    <property type="project" value="GO_Central"/>
</dbReference>
<dbReference type="GO" id="GO:0046872">
    <property type="term" value="F:metal ion binding"/>
    <property type="evidence" value="ECO:0007669"/>
    <property type="project" value="UniProtKB-KW"/>
</dbReference>
<dbReference type="GO" id="GO:0022900">
    <property type="term" value="P:electron transport chain"/>
    <property type="evidence" value="ECO:0000318"/>
    <property type="project" value="GO_Central"/>
</dbReference>
<dbReference type="FunFam" id="3.30.70.20:FF:000015">
    <property type="entry name" value="Electron transfer flavoprotein-ubiquinone oxidoreductase"/>
    <property type="match status" value="1"/>
</dbReference>
<dbReference type="Gene3D" id="3.30.70.20">
    <property type="match status" value="1"/>
</dbReference>
<dbReference type="Gene3D" id="3.30.9.90">
    <property type="match status" value="1"/>
</dbReference>
<dbReference type="Gene3D" id="3.50.50.60">
    <property type="entry name" value="FAD/NAD(P)-binding domain"/>
    <property type="match status" value="1"/>
</dbReference>
<dbReference type="InterPro" id="IPR040156">
    <property type="entry name" value="ETF-QO"/>
</dbReference>
<dbReference type="InterPro" id="IPR049398">
    <property type="entry name" value="ETF-QO/FixC_UQ-bd"/>
</dbReference>
<dbReference type="InterPro" id="IPR007859">
    <property type="entry name" value="ETF-QO/FixX_C"/>
</dbReference>
<dbReference type="InterPro" id="IPR036188">
    <property type="entry name" value="FAD/NAD-bd_sf"/>
</dbReference>
<dbReference type="PANTHER" id="PTHR10617">
    <property type="entry name" value="ELECTRON TRANSFER FLAVOPROTEIN-UBIQUINONE OXIDOREDUCTASE"/>
    <property type="match status" value="1"/>
</dbReference>
<dbReference type="PANTHER" id="PTHR10617:SF107">
    <property type="entry name" value="ELECTRON TRANSFER FLAVOPROTEIN-UBIQUINONE OXIDOREDUCTASE, MITOCHONDRIAL"/>
    <property type="match status" value="1"/>
</dbReference>
<dbReference type="Pfam" id="PF21162">
    <property type="entry name" value="ETFQO_UQ-bd"/>
    <property type="match status" value="1"/>
</dbReference>
<dbReference type="Pfam" id="PF05187">
    <property type="entry name" value="Fer4_ETF_QO"/>
    <property type="match status" value="1"/>
</dbReference>
<dbReference type="Pfam" id="PF13450">
    <property type="entry name" value="NAD_binding_8"/>
    <property type="match status" value="1"/>
</dbReference>
<dbReference type="SUPFAM" id="SSF54862">
    <property type="entry name" value="4Fe-4S ferredoxins"/>
    <property type="match status" value="1"/>
</dbReference>
<dbReference type="SUPFAM" id="SSF54373">
    <property type="entry name" value="FAD-linked reductases, C-terminal domain"/>
    <property type="match status" value="1"/>
</dbReference>
<dbReference type="SUPFAM" id="SSF51905">
    <property type="entry name" value="FAD/NAD(P)-binding domain"/>
    <property type="match status" value="1"/>
</dbReference>
<reference key="1">
    <citation type="journal article" date="2005" name="Nature">
        <title>The genome of the social amoeba Dictyostelium discoideum.</title>
        <authorList>
            <person name="Eichinger L."/>
            <person name="Pachebat J.A."/>
            <person name="Gloeckner G."/>
            <person name="Rajandream M.A."/>
            <person name="Sucgang R."/>
            <person name="Berriman M."/>
            <person name="Song J."/>
            <person name="Olsen R."/>
            <person name="Szafranski K."/>
            <person name="Xu Q."/>
            <person name="Tunggal B."/>
            <person name="Kummerfeld S."/>
            <person name="Madera M."/>
            <person name="Konfortov B.A."/>
            <person name="Rivero F."/>
            <person name="Bankier A.T."/>
            <person name="Lehmann R."/>
            <person name="Hamlin N."/>
            <person name="Davies R."/>
            <person name="Gaudet P."/>
            <person name="Fey P."/>
            <person name="Pilcher K."/>
            <person name="Chen G."/>
            <person name="Saunders D."/>
            <person name="Sodergren E.J."/>
            <person name="Davis P."/>
            <person name="Kerhornou A."/>
            <person name="Nie X."/>
            <person name="Hall N."/>
            <person name="Anjard C."/>
            <person name="Hemphill L."/>
            <person name="Bason N."/>
            <person name="Farbrother P."/>
            <person name="Desany B."/>
            <person name="Just E."/>
            <person name="Morio T."/>
            <person name="Rost R."/>
            <person name="Churcher C.M."/>
            <person name="Cooper J."/>
            <person name="Haydock S."/>
            <person name="van Driessche N."/>
            <person name="Cronin A."/>
            <person name="Goodhead I."/>
            <person name="Muzny D.M."/>
            <person name="Mourier T."/>
            <person name="Pain A."/>
            <person name="Lu M."/>
            <person name="Harper D."/>
            <person name="Lindsay R."/>
            <person name="Hauser H."/>
            <person name="James K.D."/>
            <person name="Quiles M."/>
            <person name="Madan Babu M."/>
            <person name="Saito T."/>
            <person name="Buchrieser C."/>
            <person name="Wardroper A."/>
            <person name="Felder M."/>
            <person name="Thangavelu M."/>
            <person name="Johnson D."/>
            <person name="Knights A."/>
            <person name="Loulseged H."/>
            <person name="Mungall K.L."/>
            <person name="Oliver K."/>
            <person name="Price C."/>
            <person name="Quail M.A."/>
            <person name="Urushihara H."/>
            <person name="Hernandez J."/>
            <person name="Rabbinowitsch E."/>
            <person name="Steffen D."/>
            <person name="Sanders M."/>
            <person name="Ma J."/>
            <person name="Kohara Y."/>
            <person name="Sharp S."/>
            <person name="Simmonds M.N."/>
            <person name="Spiegler S."/>
            <person name="Tivey A."/>
            <person name="Sugano S."/>
            <person name="White B."/>
            <person name="Walker D."/>
            <person name="Woodward J.R."/>
            <person name="Winckler T."/>
            <person name="Tanaka Y."/>
            <person name="Shaulsky G."/>
            <person name="Schleicher M."/>
            <person name="Weinstock G.M."/>
            <person name="Rosenthal A."/>
            <person name="Cox E.C."/>
            <person name="Chisholm R.L."/>
            <person name="Gibbs R.A."/>
            <person name="Loomis W.F."/>
            <person name="Platzer M."/>
            <person name="Kay R.R."/>
            <person name="Williams J.G."/>
            <person name="Dear P.H."/>
            <person name="Noegel A.A."/>
            <person name="Barrell B.G."/>
            <person name="Kuspa A."/>
        </authorList>
    </citation>
    <scope>NUCLEOTIDE SEQUENCE [LARGE SCALE GENOMIC DNA]</scope>
    <source>
        <strain>AX4</strain>
    </source>
</reference>
<sequence>MLKSFSLIGKNITKNVSLSSSNKFLFGKNHQNMKSIYSSIRFFSSEQELPPRDSDQFDVVIVGAGPSGLSTAIRLKQLSEKAGKDLRVCVVEKGSEVGSHILSGAVMDPKALNELIPDWKEKGAPLITEVKQDKFYFLTENRSLRLPTPRLMHNEGNYIISLGNVVRWLGEQAESMGVEVYPSFAASEVLYHDNGAVRGIATNDMGIAKDGSLTSNFTRGMELNARLTIFAEGCRGSLTKGLFEKFNLRDECEPQTFGLGIKETWEIKPEKHQQGLVIHTLGYPLSDELLGGSFIYHAENNTVNLGLVVGLDYSNPYLNPYQEFQKLKLHPMVKDMLEGGTCIQYGARTINEGGFQSIPKLVFPGGALVGCTAGFVHVPKVKGSHYAMKTGILAAEAAFPQLISQQEKEQEQEQDKPSVEPLLINEYPEELKKSWVWKELREVRNYRPSLHWGTIPGLIYGALEMYIFRGHTPWTLSNGKPDNERLKPAAECKKIEYKKPDGQITFDLMTSVMRSGTNHEENQPIHLKVRDMEVAKKVNRDIYDGPEGRFCPAGVYEWVEGEKGEKELVRNSVFCLHCKTCDIKDPTQNIDFTVPEGGGGPKYGAM</sequence>
<comment type="function">
    <text evidence="1">Accepts electrons from ETF and reduces ubiquinone.</text>
</comment>
<comment type="catalytic activity">
    <reaction>
        <text>a ubiquinone + reduced [electron-transfer flavoprotein] = a ubiquinol + oxidized [electron-transfer flavoprotein] + H(+)</text>
        <dbReference type="Rhea" id="RHEA:24052"/>
        <dbReference type="Rhea" id="RHEA-COMP:9565"/>
        <dbReference type="Rhea" id="RHEA-COMP:9566"/>
        <dbReference type="Rhea" id="RHEA-COMP:10685"/>
        <dbReference type="Rhea" id="RHEA-COMP:10686"/>
        <dbReference type="ChEBI" id="CHEBI:15378"/>
        <dbReference type="ChEBI" id="CHEBI:16389"/>
        <dbReference type="ChEBI" id="CHEBI:17976"/>
        <dbReference type="ChEBI" id="CHEBI:57692"/>
        <dbReference type="ChEBI" id="CHEBI:58307"/>
        <dbReference type="EC" id="1.5.5.1"/>
    </reaction>
</comment>
<comment type="cofactor">
    <cofactor evidence="1">
        <name>[4Fe-4S] cluster</name>
        <dbReference type="ChEBI" id="CHEBI:49883"/>
    </cofactor>
    <text evidence="1">Binds 1 [4Fe-4S] cluster.</text>
</comment>
<comment type="cofactor">
    <cofactor evidence="1">
        <name>FAD</name>
        <dbReference type="ChEBI" id="CHEBI:57692"/>
    </cofactor>
</comment>
<comment type="subunit">
    <text evidence="1">Monomer.</text>
</comment>
<comment type="subcellular location">
    <subcellularLocation>
        <location evidence="1">Mitochondrion inner membrane</location>
    </subcellularLocation>
</comment>
<comment type="similarity">
    <text evidence="3">Belongs to the ETF-QO/FixC family.</text>
</comment>
<organism>
    <name type="scientific">Dictyostelium discoideum</name>
    <name type="common">Social amoeba</name>
    <dbReference type="NCBI Taxonomy" id="44689"/>
    <lineage>
        <taxon>Eukaryota</taxon>
        <taxon>Amoebozoa</taxon>
        <taxon>Evosea</taxon>
        <taxon>Eumycetozoa</taxon>
        <taxon>Dictyostelia</taxon>
        <taxon>Dictyosteliales</taxon>
        <taxon>Dictyosteliaceae</taxon>
        <taxon>Dictyostelium</taxon>
    </lineage>
</organism>
<accession>Q54XM6</accession>
<gene>
    <name type="primary">etfdh</name>
    <name type="ORF">DDB_G0278849</name>
</gene>
<proteinExistence type="inferred from homology"/>
<protein>
    <recommendedName>
        <fullName>Electron transfer flavoprotein-ubiquinone oxidoreductase, mitochondrial</fullName>
        <shortName>ETF-QO</shortName>
        <shortName>ETF-ubiquinone oxidoreductase</shortName>
        <ecNumber>1.5.5.1</ecNumber>
    </recommendedName>
    <alternativeName>
        <fullName>Electron-transferring-flavoprotein dehydrogenase</fullName>
        <shortName>ETF dehydrogenase</shortName>
    </alternativeName>
</protein>
<name>ETFD_DICDI</name>
<keyword id="KW-0004">4Fe-4S</keyword>
<keyword id="KW-0249">Electron transport</keyword>
<keyword id="KW-0274">FAD</keyword>
<keyword id="KW-0285">Flavoprotein</keyword>
<keyword id="KW-0408">Iron</keyword>
<keyword id="KW-0411">Iron-sulfur</keyword>
<keyword id="KW-0472">Membrane</keyword>
<keyword id="KW-0479">Metal-binding</keyword>
<keyword id="KW-0496">Mitochondrion</keyword>
<keyword id="KW-0999">Mitochondrion inner membrane</keyword>
<keyword id="KW-0560">Oxidoreductase</keyword>
<keyword id="KW-1185">Reference proteome</keyword>
<keyword id="KW-0809">Transit peptide</keyword>
<keyword id="KW-0812">Transmembrane</keyword>
<keyword id="KW-1133">Transmembrane helix</keyword>
<keyword id="KW-0813">Transport</keyword>
<keyword id="KW-0830">Ubiquinone</keyword>